<feature type="chain" id="PRO_0000416664" description="Uncharacterized protein C18.20">
    <location>
        <begin position="1"/>
        <end position="72"/>
    </location>
</feature>
<protein>
    <recommendedName>
        <fullName>Uncharacterized protein C18.20</fullName>
    </recommendedName>
</protein>
<keyword id="KW-1185">Reference proteome</keyword>
<gene>
    <name type="ORF">SPCC18.20</name>
</gene>
<sequence length="72" mass="8781">MSLYWNRKKSDTEKTRPMDIFLVSDFIVYYRRNMIANLMNDYRTLSIRVSCLNINKNWNLNRALYLLNIKNT</sequence>
<proteinExistence type="predicted"/>
<name>YQ9K_SCHPO</name>
<accession>G2TRU1</accession>
<organism>
    <name type="scientific">Schizosaccharomyces pombe (strain 972 / ATCC 24843)</name>
    <name type="common">Fission yeast</name>
    <dbReference type="NCBI Taxonomy" id="284812"/>
    <lineage>
        <taxon>Eukaryota</taxon>
        <taxon>Fungi</taxon>
        <taxon>Dikarya</taxon>
        <taxon>Ascomycota</taxon>
        <taxon>Taphrinomycotina</taxon>
        <taxon>Schizosaccharomycetes</taxon>
        <taxon>Schizosaccharomycetales</taxon>
        <taxon>Schizosaccharomycetaceae</taxon>
        <taxon>Schizosaccharomyces</taxon>
    </lineage>
</organism>
<reference key="1">
    <citation type="journal article" date="2002" name="Nature">
        <title>The genome sequence of Schizosaccharomyces pombe.</title>
        <authorList>
            <person name="Wood V."/>
            <person name="Gwilliam R."/>
            <person name="Rajandream M.A."/>
            <person name="Lyne M.H."/>
            <person name="Lyne R."/>
            <person name="Stewart A."/>
            <person name="Sgouros J.G."/>
            <person name="Peat N."/>
            <person name="Hayles J."/>
            <person name="Baker S.G."/>
            <person name="Basham D."/>
            <person name="Bowman S."/>
            <person name="Brooks K."/>
            <person name="Brown D."/>
            <person name="Brown S."/>
            <person name="Chillingworth T."/>
            <person name="Churcher C.M."/>
            <person name="Collins M."/>
            <person name="Connor R."/>
            <person name="Cronin A."/>
            <person name="Davis P."/>
            <person name="Feltwell T."/>
            <person name="Fraser A."/>
            <person name="Gentles S."/>
            <person name="Goble A."/>
            <person name="Hamlin N."/>
            <person name="Harris D.E."/>
            <person name="Hidalgo J."/>
            <person name="Hodgson G."/>
            <person name="Holroyd S."/>
            <person name="Hornsby T."/>
            <person name="Howarth S."/>
            <person name="Huckle E.J."/>
            <person name="Hunt S."/>
            <person name="Jagels K."/>
            <person name="James K.D."/>
            <person name="Jones L."/>
            <person name="Jones M."/>
            <person name="Leather S."/>
            <person name="McDonald S."/>
            <person name="McLean J."/>
            <person name="Mooney P."/>
            <person name="Moule S."/>
            <person name="Mungall K.L."/>
            <person name="Murphy L.D."/>
            <person name="Niblett D."/>
            <person name="Odell C."/>
            <person name="Oliver K."/>
            <person name="O'Neil S."/>
            <person name="Pearson D."/>
            <person name="Quail M.A."/>
            <person name="Rabbinowitsch E."/>
            <person name="Rutherford K.M."/>
            <person name="Rutter S."/>
            <person name="Saunders D."/>
            <person name="Seeger K."/>
            <person name="Sharp S."/>
            <person name="Skelton J."/>
            <person name="Simmonds M.N."/>
            <person name="Squares R."/>
            <person name="Squares S."/>
            <person name="Stevens K."/>
            <person name="Taylor K."/>
            <person name="Taylor R.G."/>
            <person name="Tivey A."/>
            <person name="Walsh S.V."/>
            <person name="Warren T."/>
            <person name="Whitehead S."/>
            <person name="Woodward J.R."/>
            <person name="Volckaert G."/>
            <person name="Aert R."/>
            <person name="Robben J."/>
            <person name="Grymonprez B."/>
            <person name="Weltjens I."/>
            <person name="Vanstreels E."/>
            <person name="Rieger M."/>
            <person name="Schaefer M."/>
            <person name="Mueller-Auer S."/>
            <person name="Gabel C."/>
            <person name="Fuchs M."/>
            <person name="Duesterhoeft A."/>
            <person name="Fritzc C."/>
            <person name="Holzer E."/>
            <person name="Moestl D."/>
            <person name="Hilbert H."/>
            <person name="Borzym K."/>
            <person name="Langer I."/>
            <person name="Beck A."/>
            <person name="Lehrach H."/>
            <person name="Reinhardt R."/>
            <person name="Pohl T.M."/>
            <person name="Eger P."/>
            <person name="Zimmermann W."/>
            <person name="Wedler H."/>
            <person name="Wambutt R."/>
            <person name="Purnelle B."/>
            <person name="Goffeau A."/>
            <person name="Cadieu E."/>
            <person name="Dreano S."/>
            <person name="Gloux S."/>
            <person name="Lelaure V."/>
            <person name="Mottier S."/>
            <person name="Galibert F."/>
            <person name="Aves S.J."/>
            <person name="Xiang Z."/>
            <person name="Hunt C."/>
            <person name="Moore K."/>
            <person name="Hurst S.M."/>
            <person name="Lucas M."/>
            <person name="Rochet M."/>
            <person name="Gaillardin C."/>
            <person name="Tallada V.A."/>
            <person name="Garzon A."/>
            <person name="Thode G."/>
            <person name="Daga R.R."/>
            <person name="Cruzado L."/>
            <person name="Jimenez J."/>
            <person name="Sanchez M."/>
            <person name="del Rey F."/>
            <person name="Benito J."/>
            <person name="Dominguez A."/>
            <person name="Revuelta J.L."/>
            <person name="Moreno S."/>
            <person name="Armstrong J."/>
            <person name="Forsburg S.L."/>
            <person name="Cerutti L."/>
            <person name="Lowe T."/>
            <person name="McCombie W.R."/>
            <person name="Paulsen I."/>
            <person name="Potashkin J."/>
            <person name="Shpakovski G.V."/>
            <person name="Ussery D."/>
            <person name="Barrell B.G."/>
            <person name="Nurse P."/>
        </authorList>
    </citation>
    <scope>NUCLEOTIDE SEQUENCE [LARGE SCALE GENOMIC DNA]</scope>
    <source>
        <strain>972 / ATCC 24843</strain>
    </source>
</reference>
<reference key="2">
    <citation type="journal article" date="2011" name="Science">
        <title>Comparative functional genomics of the fission yeasts.</title>
        <authorList>
            <person name="Rhind N."/>
            <person name="Chen Z."/>
            <person name="Yassour M."/>
            <person name="Thompson D.A."/>
            <person name="Haas B.J."/>
            <person name="Habib N."/>
            <person name="Wapinski I."/>
            <person name="Roy S."/>
            <person name="Lin M.F."/>
            <person name="Heiman D.I."/>
            <person name="Young S.K."/>
            <person name="Furuya K."/>
            <person name="Guo Y."/>
            <person name="Pidoux A."/>
            <person name="Chen H.M."/>
            <person name="Robbertse B."/>
            <person name="Goldberg J.M."/>
            <person name="Aoki K."/>
            <person name="Bayne E.H."/>
            <person name="Berlin A.M."/>
            <person name="Desjardins C.A."/>
            <person name="Dobbs E."/>
            <person name="Dukaj L."/>
            <person name="Fan L."/>
            <person name="FitzGerald M.G."/>
            <person name="French C."/>
            <person name="Gujja S."/>
            <person name="Hansen K."/>
            <person name="Keifenheim D."/>
            <person name="Levin J.Z."/>
            <person name="Mosher R.A."/>
            <person name="Mueller C.A."/>
            <person name="Pfiffner J."/>
            <person name="Priest M."/>
            <person name="Russ C."/>
            <person name="Smialowska A."/>
            <person name="Swoboda P."/>
            <person name="Sykes S.M."/>
            <person name="Vaughn M."/>
            <person name="Vengrova S."/>
            <person name="Yoder R."/>
            <person name="Zeng Q."/>
            <person name="Allshire R."/>
            <person name="Baulcombe D."/>
            <person name="Birren B.W."/>
            <person name="Brown W."/>
            <person name="Ekwall K."/>
            <person name="Kellis M."/>
            <person name="Leatherwood J."/>
            <person name="Levin H."/>
            <person name="Margalit H."/>
            <person name="Martienssen R."/>
            <person name="Nieduszynski C.A."/>
            <person name="Spatafora J.W."/>
            <person name="Friedman N."/>
            <person name="Dalgaard J.Z."/>
            <person name="Baumann P."/>
            <person name="Niki H."/>
            <person name="Regev A."/>
            <person name="Nusbaum C."/>
        </authorList>
    </citation>
    <scope>IDENTIFICATION</scope>
</reference>
<dbReference type="EMBL" id="CU329672">
    <property type="protein sequence ID" value="CCD31400.1"/>
    <property type="molecule type" value="Genomic_DNA"/>
</dbReference>
<dbReference type="RefSeq" id="XP_004001755.1">
    <property type="nucleotide sequence ID" value="XM_004001706.1"/>
</dbReference>
<dbReference type="PaxDb" id="4896-SPCC18.20.1"/>
<dbReference type="EnsemblFungi" id="SPCC18.20.1">
    <property type="protein sequence ID" value="SPCC18.20.1:pep"/>
    <property type="gene ID" value="SPCC18.20"/>
</dbReference>
<dbReference type="PomBase" id="SPCC18.20"/>
<dbReference type="VEuPathDB" id="FungiDB:SPCC18.20"/>
<dbReference type="HOGENOM" id="CLU_2723640_0_0_1"/>
<dbReference type="InParanoid" id="G2TRU1"/>
<dbReference type="PRO" id="PR:G2TRU1"/>
<dbReference type="Proteomes" id="UP000002485">
    <property type="component" value="Chromosome III"/>
</dbReference>